<name>GLMM_SALDC</name>
<dbReference type="EC" id="5.4.2.10" evidence="1"/>
<dbReference type="EMBL" id="CP001144">
    <property type="protein sequence ID" value="ACH77522.1"/>
    <property type="molecule type" value="Genomic_DNA"/>
</dbReference>
<dbReference type="RefSeq" id="WP_000071169.1">
    <property type="nucleotide sequence ID" value="NC_011205.1"/>
</dbReference>
<dbReference type="SMR" id="B5FI19"/>
<dbReference type="KEGG" id="sed:SeD_A3651"/>
<dbReference type="HOGENOM" id="CLU_016950_7_0_6"/>
<dbReference type="Proteomes" id="UP000008322">
    <property type="component" value="Chromosome"/>
</dbReference>
<dbReference type="GO" id="GO:0005829">
    <property type="term" value="C:cytosol"/>
    <property type="evidence" value="ECO:0007669"/>
    <property type="project" value="TreeGrafter"/>
</dbReference>
<dbReference type="GO" id="GO:0000287">
    <property type="term" value="F:magnesium ion binding"/>
    <property type="evidence" value="ECO:0007669"/>
    <property type="project" value="UniProtKB-UniRule"/>
</dbReference>
<dbReference type="GO" id="GO:0008966">
    <property type="term" value="F:phosphoglucosamine mutase activity"/>
    <property type="evidence" value="ECO:0007669"/>
    <property type="project" value="UniProtKB-UniRule"/>
</dbReference>
<dbReference type="GO" id="GO:0004615">
    <property type="term" value="F:phosphomannomutase activity"/>
    <property type="evidence" value="ECO:0007669"/>
    <property type="project" value="TreeGrafter"/>
</dbReference>
<dbReference type="GO" id="GO:0005975">
    <property type="term" value="P:carbohydrate metabolic process"/>
    <property type="evidence" value="ECO:0007669"/>
    <property type="project" value="InterPro"/>
</dbReference>
<dbReference type="GO" id="GO:0009252">
    <property type="term" value="P:peptidoglycan biosynthetic process"/>
    <property type="evidence" value="ECO:0007669"/>
    <property type="project" value="TreeGrafter"/>
</dbReference>
<dbReference type="GO" id="GO:0006048">
    <property type="term" value="P:UDP-N-acetylglucosamine biosynthetic process"/>
    <property type="evidence" value="ECO:0007669"/>
    <property type="project" value="TreeGrafter"/>
</dbReference>
<dbReference type="CDD" id="cd05802">
    <property type="entry name" value="GlmM"/>
    <property type="match status" value="1"/>
</dbReference>
<dbReference type="FunFam" id="3.30.310.50:FF:000001">
    <property type="entry name" value="Phosphoglucosamine mutase"/>
    <property type="match status" value="1"/>
</dbReference>
<dbReference type="FunFam" id="3.40.120.10:FF:000001">
    <property type="entry name" value="Phosphoglucosamine mutase"/>
    <property type="match status" value="1"/>
</dbReference>
<dbReference type="FunFam" id="3.40.120.10:FF:000002">
    <property type="entry name" value="Phosphoglucosamine mutase"/>
    <property type="match status" value="1"/>
</dbReference>
<dbReference type="Gene3D" id="3.40.120.10">
    <property type="entry name" value="Alpha-D-Glucose-1,6-Bisphosphate, subunit A, domain 3"/>
    <property type="match status" value="3"/>
</dbReference>
<dbReference type="Gene3D" id="3.30.310.50">
    <property type="entry name" value="Alpha-D-phosphohexomutase, C-terminal domain"/>
    <property type="match status" value="1"/>
</dbReference>
<dbReference type="HAMAP" id="MF_01554_B">
    <property type="entry name" value="GlmM_B"/>
    <property type="match status" value="1"/>
</dbReference>
<dbReference type="InterPro" id="IPR005844">
    <property type="entry name" value="A-D-PHexomutase_a/b/a-I"/>
</dbReference>
<dbReference type="InterPro" id="IPR016055">
    <property type="entry name" value="A-D-PHexomutase_a/b/a-I/II/III"/>
</dbReference>
<dbReference type="InterPro" id="IPR005845">
    <property type="entry name" value="A-D-PHexomutase_a/b/a-II"/>
</dbReference>
<dbReference type="InterPro" id="IPR005846">
    <property type="entry name" value="A-D-PHexomutase_a/b/a-III"/>
</dbReference>
<dbReference type="InterPro" id="IPR005843">
    <property type="entry name" value="A-D-PHexomutase_C"/>
</dbReference>
<dbReference type="InterPro" id="IPR036900">
    <property type="entry name" value="A-D-PHexomutase_C_sf"/>
</dbReference>
<dbReference type="InterPro" id="IPR016066">
    <property type="entry name" value="A-D-PHexomutase_CS"/>
</dbReference>
<dbReference type="InterPro" id="IPR005841">
    <property type="entry name" value="Alpha-D-phosphohexomutase_SF"/>
</dbReference>
<dbReference type="InterPro" id="IPR006352">
    <property type="entry name" value="GlmM_bact"/>
</dbReference>
<dbReference type="InterPro" id="IPR050060">
    <property type="entry name" value="Phosphoglucosamine_mutase"/>
</dbReference>
<dbReference type="NCBIfam" id="TIGR01455">
    <property type="entry name" value="glmM"/>
    <property type="match status" value="1"/>
</dbReference>
<dbReference type="NCBIfam" id="NF008139">
    <property type="entry name" value="PRK10887.1"/>
    <property type="match status" value="1"/>
</dbReference>
<dbReference type="PANTHER" id="PTHR42946:SF1">
    <property type="entry name" value="PHOSPHOGLUCOMUTASE (ALPHA-D-GLUCOSE-1,6-BISPHOSPHATE-DEPENDENT)"/>
    <property type="match status" value="1"/>
</dbReference>
<dbReference type="PANTHER" id="PTHR42946">
    <property type="entry name" value="PHOSPHOHEXOSE MUTASE"/>
    <property type="match status" value="1"/>
</dbReference>
<dbReference type="Pfam" id="PF02878">
    <property type="entry name" value="PGM_PMM_I"/>
    <property type="match status" value="1"/>
</dbReference>
<dbReference type="Pfam" id="PF02879">
    <property type="entry name" value="PGM_PMM_II"/>
    <property type="match status" value="1"/>
</dbReference>
<dbReference type="Pfam" id="PF02880">
    <property type="entry name" value="PGM_PMM_III"/>
    <property type="match status" value="1"/>
</dbReference>
<dbReference type="Pfam" id="PF00408">
    <property type="entry name" value="PGM_PMM_IV"/>
    <property type="match status" value="1"/>
</dbReference>
<dbReference type="PRINTS" id="PR00509">
    <property type="entry name" value="PGMPMM"/>
</dbReference>
<dbReference type="SUPFAM" id="SSF55957">
    <property type="entry name" value="Phosphoglucomutase, C-terminal domain"/>
    <property type="match status" value="1"/>
</dbReference>
<dbReference type="SUPFAM" id="SSF53738">
    <property type="entry name" value="Phosphoglucomutase, first 3 domains"/>
    <property type="match status" value="3"/>
</dbReference>
<dbReference type="PROSITE" id="PS00710">
    <property type="entry name" value="PGM_PMM"/>
    <property type="match status" value="1"/>
</dbReference>
<feature type="chain" id="PRO_1000201134" description="Phosphoglucosamine mutase">
    <location>
        <begin position="1"/>
        <end position="445"/>
    </location>
</feature>
<feature type="active site" description="Phosphoserine intermediate" evidence="1">
    <location>
        <position position="102"/>
    </location>
</feature>
<feature type="binding site" description="via phosphate group" evidence="1">
    <location>
        <position position="102"/>
    </location>
    <ligand>
        <name>Mg(2+)</name>
        <dbReference type="ChEBI" id="CHEBI:18420"/>
    </ligand>
</feature>
<feature type="binding site" evidence="1">
    <location>
        <position position="241"/>
    </location>
    <ligand>
        <name>Mg(2+)</name>
        <dbReference type="ChEBI" id="CHEBI:18420"/>
    </ligand>
</feature>
<feature type="binding site" evidence="1">
    <location>
        <position position="243"/>
    </location>
    <ligand>
        <name>Mg(2+)</name>
        <dbReference type="ChEBI" id="CHEBI:18420"/>
    </ligand>
</feature>
<feature type="binding site" evidence="1">
    <location>
        <position position="245"/>
    </location>
    <ligand>
        <name>Mg(2+)</name>
        <dbReference type="ChEBI" id="CHEBI:18420"/>
    </ligand>
</feature>
<feature type="modified residue" description="Phosphoserine" evidence="1">
    <location>
        <position position="102"/>
    </location>
</feature>
<comment type="function">
    <text evidence="1">Catalyzes the conversion of glucosamine-6-phosphate to glucosamine-1-phosphate.</text>
</comment>
<comment type="catalytic activity">
    <reaction evidence="1">
        <text>alpha-D-glucosamine 1-phosphate = D-glucosamine 6-phosphate</text>
        <dbReference type="Rhea" id="RHEA:23424"/>
        <dbReference type="ChEBI" id="CHEBI:58516"/>
        <dbReference type="ChEBI" id="CHEBI:58725"/>
        <dbReference type="EC" id="5.4.2.10"/>
    </reaction>
</comment>
<comment type="cofactor">
    <cofactor evidence="1">
        <name>Mg(2+)</name>
        <dbReference type="ChEBI" id="CHEBI:18420"/>
    </cofactor>
    <text evidence="1">Binds 1 Mg(2+) ion per subunit.</text>
</comment>
<comment type="PTM">
    <text evidence="1">Activated by phosphorylation.</text>
</comment>
<comment type="similarity">
    <text evidence="1">Belongs to the phosphohexose mutase family.</text>
</comment>
<protein>
    <recommendedName>
        <fullName evidence="1">Phosphoglucosamine mutase</fullName>
        <ecNumber evidence="1">5.4.2.10</ecNumber>
    </recommendedName>
</protein>
<proteinExistence type="inferred from homology"/>
<keyword id="KW-0413">Isomerase</keyword>
<keyword id="KW-0460">Magnesium</keyword>
<keyword id="KW-0479">Metal-binding</keyword>
<keyword id="KW-0597">Phosphoprotein</keyword>
<evidence type="ECO:0000255" key="1">
    <source>
        <dbReference type="HAMAP-Rule" id="MF_01554"/>
    </source>
</evidence>
<gene>
    <name evidence="1" type="primary">glmM</name>
    <name type="ordered locus">SeD_A3651</name>
</gene>
<reference key="1">
    <citation type="journal article" date="2011" name="J. Bacteriol.">
        <title>Comparative genomics of 28 Salmonella enterica isolates: evidence for CRISPR-mediated adaptive sublineage evolution.</title>
        <authorList>
            <person name="Fricke W.F."/>
            <person name="Mammel M.K."/>
            <person name="McDermott P.F."/>
            <person name="Tartera C."/>
            <person name="White D.G."/>
            <person name="Leclerc J.E."/>
            <person name="Ravel J."/>
            <person name="Cebula T.A."/>
        </authorList>
    </citation>
    <scope>NUCLEOTIDE SEQUENCE [LARGE SCALE GENOMIC DNA]</scope>
    <source>
        <strain>CT_02021853</strain>
    </source>
</reference>
<sequence length="445" mass="47441">MSNRKYFGTDGIRGRVGNAPITPDFVLKLGWAAGKVLARHGSRKIIIGKDTRISGYMLESALEAGLAAAGLSASFTGPMPTPAVAYLTRTFRAEAGIVISASHNPFYDNGIKFFSIDGTKLPDDVEEAIEAEMEKEITCVDSAELGKASRIVDAAGRYIEFCKGTFPNELSLNGLKVVVDCANGATYHIAPNVLRELGATVIAIGCEPNGVNINEEVGATDVRALQARVLAEKADLGIALDGDGDRVIMVDHEGNKVDGDQIMYIIAREGLRQGQLRGGAVGTLMSNMGLELALKQLGIPFARAKVGDRYVLEKLQEKGWRIGAENSGHVILLDKTTTGDGIVAGLQVLAAMVRNHMSLHDLCSGMKMFPQILVNVRYTAGSGDPLENEAVKAVTADVEATLGNRGRVLLRKSGTEPLIRVMVEGEDEAQVTAFAHRIADAVKAV</sequence>
<accession>B5FI19</accession>
<organism>
    <name type="scientific">Salmonella dublin (strain CT_02021853)</name>
    <dbReference type="NCBI Taxonomy" id="439851"/>
    <lineage>
        <taxon>Bacteria</taxon>
        <taxon>Pseudomonadati</taxon>
        <taxon>Pseudomonadota</taxon>
        <taxon>Gammaproteobacteria</taxon>
        <taxon>Enterobacterales</taxon>
        <taxon>Enterobacteriaceae</taxon>
        <taxon>Salmonella</taxon>
    </lineage>
</organism>